<evidence type="ECO:0000250" key="1"/>
<evidence type="ECO:0000250" key="2">
    <source>
        <dbReference type="UniProtKB" id="P15927"/>
    </source>
</evidence>
<evidence type="ECO:0000256" key="3">
    <source>
        <dbReference type="SAM" id="MobiDB-lite"/>
    </source>
</evidence>
<evidence type="ECO:0000305" key="4"/>
<dbReference type="EMBL" id="BC079180">
    <property type="protein sequence ID" value="AAH79180.1"/>
    <property type="molecule type" value="mRNA"/>
</dbReference>
<dbReference type="EMBL" id="X98490">
    <property type="protein sequence ID" value="CAA67116.1"/>
    <property type="molecule type" value="mRNA"/>
</dbReference>
<dbReference type="RefSeq" id="NP_067593.1">
    <property type="nucleotide sequence ID" value="NM_021582.3"/>
</dbReference>
<dbReference type="SMR" id="Q63528"/>
<dbReference type="BioGRID" id="248725">
    <property type="interactions" value="1"/>
</dbReference>
<dbReference type="FunCoup" id="Q63528">
    <property type="interactions" value="2764"/>
</dbReference>
<dbReference type="STRING" id="10116.ENSRNOP00000017549"/>
<dbReference type="GlyGen" id="Q63528">
    <property type="glycosylation" value="1 site"/>
</dbReference>
<dbReference type="PhosphoSitePlus" id="Q63528"/>
<dbReference type="jPOST" id="Q63528"/>
<dbReference type="PaxDb" id="10116-ENSRNOP00000017549"/>
<dbReference type="Ensembl" id="ENSRNOT00000017549.7">
    <property type="protein sequence ID" value="ENSRNOP00000017549.3"/>
    <property type="gene ID" value="ENSRNOG00000013005.7"/>
</dbReference>
<dbReference type="GeneID" id="59102"/>
<dbReference type="KEGG" id="rno:59102"/>
<dbReference type="UCSC" id="RGD:619714">
    <property type="organism name" value="rat"/>
</dbReference>
<dbReference type="AGR" id="RGD:619714"/>
<dbReference type="CTD" id="6118"/>
<dbReference type="RGD" id="619714">
    <property type="gene designation" value="Rpa2"/>
</dbReference>
<dbReference type="eggNOG" id="KOG3108">
    <property type="taxonomic scope" value="Eukaryota"/>
</dbReference>
<dbReference type="GeneTree" id="ENSGT00390000010045"/>
<dbReference type="HOGENOM" id="CLU_051033_1_0_1"/>
<dbReference type="InParanoid" id="Q63528"/>
<dbReference type="OMA" id="SFGNKRY"/>
<dbReference type="PhylomeDB" id="Q63528"/>
<dbReference type="TreeFam" id="TF105242"/>
<dbReference type="Reactome" id="R-RNO-110312">
    <property type="pathway name" value="Translesion synthesis by REV1"/>
</dbReference>
<dbReference type="Reactome" id="R-RNO-110314">
    <property type="pathway name" value="Recognition of DNA damage by PCNA-containing replication complex"/>
</dbReference>
<dbReference type="Reactome" id="R-RNO-110320">
    <property type="pathway name" value="Translesion Synthesis by POLH"/>
</dbReference>
<dbReference type="Reactome" id="R-RNO-174437">
    <property type="pathway name" value="Removal of the Flap Intermediate from the C-strand"/>
</dbReference>
<dbReference type="Reactome" id="R-RNO-176187">
    <property type="pathway name" value="Activation of ATR in response to replication stress"/>
</dbReference>
<dbReference type="Reactome" id="R-RNO-3371453">
    <property type="pathway name" value="Regulation of HSF1-mediated heat shock response"/>
</dbReference>
<dbReference type="Reactome" id="R-RNO-5358565">
    <property type="pathway name" value="Mismatch repair (MMR) directed by MSH2:MSH6 (MutSalpha)"/>
</dbReference>
<dbReference type="Reactome" id="R-RNO-5358606">
    <property type="pathway name" value="Mismatch repair (MMR) directed by MSH2:MSH3 (MutSbeta)"/>
</dbReference>
<dbReference type="Reactome" id="R-RNO-5651801">
    <property type="pathway name" value="PCNA-Dependent Long Patch Base Excision Repair"/>
</dbReference>
<dbReference type="Reactome" id="R-RNO-5655862">
    <property type="pathway name" value="Translesion synthesis by POLK"/>
</dbReference>
<dbReference type="Reactome" id="R-RNO-5656121">
    <property type="pathway name" value="Translesion synthesis by POLI"/>
</dbReference>
<dbReference type="Reactome" id="R-RNO-5656169">
    <property type="pathway name" value="Termination of translesion DNA synthesis"/>
</dbReference>
<dbReference type="Reactome" id="R-RNO-5685938">
    <property type="pathway name" value="HDR through Single Strand Annealing (SSA)"/>
</dbReference>
<dbReference type="Reactome" id="R-RNO-5685942">
    <property type="pathway name" value="HDR through Homologous Recombination (HRR)"/>
</dbReference>
<dbReference type="Reactome" id="R-RNO-5693607">
    <property type="pathway name" value="Processing of DNA double-strand break ends"/>
</dbReference>
<dbReference type="Reactome" id="R-RNO-5696395">
    <property type="pathway name" value="Formation of Incision Complex in GG-NER"/>
</dbReference>
<dbReference type="Reactome" id="R-RNO-5696397">
    <property type="pathway name" value="Gap-filling DNA repair synthesis and ligation in GG-NER"/>
</dbReference>
<dbReference type="Reactome" id="R-RNO-5696400">
    <property type="pathway name" value="Dual Incision in GG-NER"/>
</dbReference>
<dbReference type="Reactome" id="R-RNO-6782135">
    <property type="pathway name" value="Dual incision in TC-NER"/>
</dbReference>
<dbReference type="Reactome" id="R-RNO-6782210">
    <property type="pathway name" value="Gap-filling DNA repair synthesis and ligation in TC-NER"/>
</dbReference>
<dbReference type="Reactome" id="R-RNO-6783310">
    <property type="pathway name" value="Fanconi Anemia Pathway"/>
</dbReference>
<dbReference type="Reactome" id="R-RNO-6804756">
    <property type="pathway name" value="Regulation of TP53 Activity through Phosphorylation"/>
</dbReference>
<dbReference type="Reactome" id="R-RNO-68962">
    <property type="pathway name" value="Activation of the pre-replicative complex"/>
</dbReference>
<dbReference type="Reactome" id="R-RNO-69166">
    <property type="pathway name" value="Removal of the Flap Intermediate"/>
</dbReference>
<dbReference type="Reactome" id="R-RNO-69473">
    <property type="pathway name" value="G2/M DNA damage checkpoint"/>
</dbReference>
<dbReference type="PRO" id="PR:Q63528"/>
<dbReference type="Proteomes" id="UP000002494">
    <property type="component" value="Chromosome 5"/>
</dbReference>
<dbReference type="Bgee" id="ENSRNOG00000013005">
    <property type="expression patterns" value="Expressed in thymus and 20 other cell types or tissues"/>
</dbReference>
<dbReference type="GO" id="GO:0000785">
    <property type="term" value="C:chromatin"/>
    <property type="evidence" value="ECO:0000266"/>
    <property type="project" value="RGD"/>
</dbReference>
<dbReference type="GO" id="GO:0000781">
    <property type="term" value="C:chromosome, telomeric region"/>
    <property type="evidence" value="ECO:0000266"/>
    <property type="project" value="RGD"/>
</dbReference>
<dbReference type="GO" id="GO:0005662">
    <property type="term" value="C:DNA replication factor A complex"/>
    <property type="evidence" value="ECO:0000314"/>
    <property type="project" value="RGD"/>
</dbReference>
<dbReference type="GO" id="GO:0005634">
    <property type="term" value="C:nucleus"/>
    <property type="evidence" value="ECO:0000250"/>
    <property type="project" value="UniProtKB"/>
</dbReference>
<dbReference type="GO" id="GO:0016605">
    <property type="term" value="C:PML body"/>
    <property type="evidence" value="ECO:0000250"/>
    <property type="project" value="UniProtKB"/>
</dbReference>
<dbReference type="GO" id="GO:0035861">
    <property type="term" value="C:site of double-strand break"/>
    <property type="evidence" value="ECO:0000266"/>
    <property type="project" value="RGD"/>
</dbReference>
<dbReference type="GO" id="GO:0003684">
    <property type="term" value="F:damaged DNA binding"/>
    <property type="evidence" value="ECO:0000250"/>
    <property type="project" value="UniProtKB"/>
</dbReference>
<dbReference type="GO" id="GO:0003677">
    <property type="term" value="F:DNA binding"/>
    <property type="evidence" value="ECO:0000266"/>
    <property type="project" value="RGD"/>
</dbReference>
<dbReference type="GO" id="GO:0019899">
    <property type="term" value="F:enzyme binding"/>
    <property type="evidence" value="ECO:0000266"/>
    <property type="project" value="RGD"/>
</dbReference>
<dbReference type="GO" id="GO:0098505">
    <property type="term" value="F:G-rich strand telomeric DNA binding"/>
    <property type="evidence" value="ECO:0000266"/>
    <property type="project" value="RGD"/>
</dbReference>
<dbReference type="GO" id="GO:0019903">
    <property type="term" value="F:protein phosphatase binding"/>
    <property type="evidence" value="ECO:0000266"/>
    <property type="project" value="RGD"/>
</dbReference>
<dbReference type="GO" id="GO:0003697">
    <property type="term" value="F:single-stranded DNA binding"/>
    <property type="evidence" value="ECO:0000314"/>
    <property type="project" value="RGD"/>
</dbReference>
<dbReference type="GO" id="GO:0042162">
    <property type="term" value="F:telomeric DNA binding"/>
    <property type="evidence" value="ECO:0000318"/>
    <property type="project" value="GO_Central"/>
</dbReference>
<dbReference type="GO" id="GO:0031625">
    <property type="term" value="F:ubiquitin protein ligase binding"/>
    <property type="evidence" value="ECO:0000266"/>
    <property type="project" value="RGD"/>
</dbReference>
<dbReference type="GO" id="GO:0006284">
    <property type="term" value="P:base-excision repair"/>
    <property type="evidence" value="ECO:0000250"/>
    <property type="project" value="UniProtKB"/>
</dbReference>
<dbReference type="GO" id="GO:0006260">
    <property type="term" value="P:DNA replication"/>
    <property type="evidence" value="ECO:0000250"/>
    <property type="project" value="UniProtKB"/>
</dbReference>
<dbReference type="GO" id="GO:0000724">
    <property type="term" value="P:double-strand break repair via homologous recombination"/>
    <property type="evidence" value="ECO:0000250"/>
    <property type="project" value="UniProtKB"/>
</dbReference>
<dbReference type="GO" id="GO:0006298">
    <property type="term" value="P:mismatch repair"/>
    <property type="evidence" value="ECO:0000250"/>
    <property type="project" value="UniProtKB"/>
</dbReference>
<dbReference type="GO" id="GO:0031571">
    <property type="term" value="P:mitotic G1 DNA damage checkpoint signaling"/>
    <property type="evidence" value="ECO:0000266"/>
    <property type="project" value="RGD"/>
</dbReference>
<dbReference type="GO" id="GO:0006289">
    <property type="term" value="P:nucleotide-excision repair"/>
    <property type="evidence" value="ECO:0000250"/>
    <property type="project" value="UniProtKB"/>
</dbReference>
<dbReference type="GO" id="GO:0034502">
    <property type="term" value="P:protein localization to chromosome"/>
    <property type="evidence" value="ECO:0000250"/>
    <property type="project" value="UniProtKB"/>
</dbReference>
<dbReference type="GO" id="GO:2000001">
    <property type="term" value="P:regulation of DNA damage checkpoint"/>
    <property type="evidence" value="ECO:0000250"/>
    <property type="project" value="UniProtKB"/>
</dbReference>
<dbReference type="GO" id="GO:0010569">
    <property type="term" value="P:regulation of double-strand break repair via homologous recombination"/>
    <property type="evidence" value="ECO:0000250"/>
    <property type="project" value="UniProtKB"/>
</dbReference>
<dbReference type="GO" id="GO:0000723">
    <property type="term" value="P:telomere maintenance"/>
    <property type="evidence" value="ECO:0000250"/>
    <property type="project" value="UniProtKB"/>
</dbReference>
<dbReference type="CDD" id="cd04478">
    <property type="entry name" value="RPA2_DBD_D"/>
    <property type="match status" value="1"/>
</dbReference>
<dbReference type="FunFam" id="1.10.10.10:FF:000168">
    <property type="entry name" value="Replication protein A 32 kDa subunit"/>
    <property type="match status" value="1"/>
</dbReference>
<dbReference type="FunFam" id="2.40.50.140:FF:000149">
    <property type="entry name" value="Replication protein A 32 kDa subunit"/>
    <property type="match status" value="1"/>
</dbReference>
<dbReference type="Gene3D" id="2.40.50.140">
    <property type="entry name" value="Nucleic acid-binding proteins"/>
    <property type="match status" value="1"/>
</dbReference>
<dbReference type="Gene3D" id="1.10.10.10">
    <property type="entry name" value="Winged helix-like DNA-binding domain superfamily/Winged helix DNA-binding domain"/>
    <property type="match status" value="1"/>
</dbReference>
<dbReference type="InterPro" id="IPR012340">
    <property type="entry name" value="NA-bd_OB-fold"/>
</dbReference>
<dbReference type="InterPro" id="IPR040260">
    <property type="entry name" value="RFA2-like"/>
</dbReference>
<dbReference type="InterPro" id="IPR014646">
    <property type="entry name" value="Rfa2/RPA32"/>
</dbReference>
<dbReference type="InterPro" id="IPR014892">
    <property type="entry name" value="RPA_C"/>
</dbReference>
<dbReference type="InterPro" id="IPR036388">
    <property type="entry name" value="WH-like_DNA-bd_sf"/>
</dbReference>
<dbReference type="InterPro" id="IPR036390">
    <property type="entry name" value="WH_DNA-bd_sf"/>
</dbReference>
<dbReference type="PANTHER" id="PTHR13989:SF54">
    <property type="entry name" value="REPLICATION PROTEIN A 32 KDA SUBUNIT"/>
    <property type="match status" value="1"/>
</dbReference>
<dbReference type="PANTHER" id="PTHR13989">
    <property type="entry name" value="REPLICATION PROTEIN A-RELATED"/>
    <property type="match status" value="1"/>
</dbReference>
<dbReference type="Pfam" id="PF08784">
    <property type="entry name" value="RPA_C"/>
    <property type="match status" value="1"/>
</dbReference>
<dbReference type="PIRSF" id="PIRSF036949">
    <property type="entry name" value="RPA32"/>
    <property type="match status" value="1"/>
</dbReference>
<dbReference type="SUPFAM" id="SSF50249">
    <property type="entry name" value="Nucleic acid-binding proteins"/>
    <property type="match status" value="1"/>
</dbReference>
<dbReference type="SUPFAM" id="SSF46785">
    <property type="entry name" value="Winged helix' DNA-binding domain"/>
    <property type="match status" value="1"/>
</dbReference>
<comment type="function">
    <text evidence="2">As part of the heterotrimeric replication protein A complex (RPA/RP-A), binds and stabilizes single-stranded DNA intermediates, that form during DNA replication or upon DNA stress. It prevents their reannealing and in parallel, recruits and activates different proteins and complexes involved in DNA metabolism. Thereby, it plays an essential role both in DNA replication and the cellular response to DNA damage. In the cellular response to DNA damage, the RPA complex controls DNA repair and DNA damage checkpoint activation. Through recruitment of ATRIP activates the ATR kinase a master regulator of the DNA damage response. It is required for the recruitment of the DNA double-strand break repair factors RAD51 and RAD52 to chromatin in response to DNA damage. Also recruits to sites of DNA damage proteins like XPA and XPG that are involved in nucleotide excision repair and is required for this mechanism of DNA repair. Also plays a role in base excision repair (BER) probably through interaction with UNG. Also recruits SMARCAL1/HARP, which is involved in replication fork restart, to sites of DNA damage. May also play a role in telomere maintenance.</text>
</comment>
<comment type="subunit">
    <text evidence="2">Component of the replication protein A complex (RPA/RP-A), a heterotrimeric complex composed of RPA1, RPA2 and RPA3. Interacts with PRPF19; the PRP19-CDC5L complex is recruited to the sites of DNA repair where it ubiquitinates the replication protein A complex (RPA). Interacts with SERTAD3. Interacts with TIPIN. Interacts with TIMELESS. Interacts with PPP4R2; the interaction is direct, DNA damage-dependent and mediates the recruitment of the PP4 catalytic subunit PPP4C. Interacts (hyperphosphorylated) with RAD51. Interacts with SMARCAL1; the interaction is direct and mediates the recruitment to the RPA complex of SMARCAL1. Interacts with RAD52 and XPA; those interactions are direct and associate RAD52 and XPA to the RPA complex. Interacts with FBH1. Interacts with ETAA1; the interaction is direct and promotes ETAA1 recruitment at stalled replication forks. Interacts with DDI2 (By similarity). Interacts (in unphosphorylated form via N-terminus) with EIF4EBP3; the interaction enhances EIF4EBP3-mediated inhibition of EIF4E-mediated mRNA nuclear export (By similarity). Interacts with nuclear UNG (isoform 2); this interaction mediates UNG recruitment to RPA-coated single-stranded DNA at stalled replication forks.</text>
</comment>
<comment type="subcellular location">
    <subcellularLocation>
        <location evidence="2">Nucleus</location>
    </subcellularLocation>
    <subcellularLocation>
        <location evidence="2">Nucleus</location>
        <location evidence="2">PML body</location>
    </subcellularLocation>
    <text evidence="2">Redistributes to discrete nuclear foci upon DNA damage in an ATR-dependent manner.</text>
</comment>
<comment type="PTM">
    <text evidence="2">Differentially phosphorylated throughout the cell cycle, becoming phosphorylated at the G1-S transition and dephosphorylated in late mitosis. Mainly phosphorylated at Ser-23 and Ser-29, by cyclin A-CDK2 and cyclin B-CDK1, respectively during DNA replication and mitosis. Dephosphorylation may require the serine/threonine-protein phosphatase 4. Phosphorylation at Ser-23 and Ser-29 is a prerequisite for further phosphorylation. Becomes hyperphosphorylated on additional residues including Ser-4, Ser-8, Thr-21 and Ser-33 in response to DNA damage. Hyperphosphorylation is mediated by ATM, ATR and PRKDC. Primarily recruited to DNA repair nuclear foci as a hypophosphorylated form it undergoes subsequent hyperphosphorylation, catalyzed by ATR. Hyperphosphorylation is required for RAD51 recruitment to chromatin and efficient DNA repair. Phosphorylation at Thr-21 depends upon RFWD3 presence.</text>
</comment>
<comment type="PTM">
    <text evidence="2">DNA damage-induced 'Lys-63'-linked polyubiquitination by PRPF19 mediates ATRIP recruitment to the RPA complex at sites of DNA damage and activation of ATR. Ubiquitinated by RFWD3 at stalled replication forks in response to DNA damage: ubiquitination by RFWD3 does not lead to degradation by the proteasome and promotes removal of the RPA complex from stalled replication forks, promoting homologous recombination.</text>
</comment>
<comment type="similarity">
    <text evidence="4">Belongs to the replication factor A protein 2 family.</text>
</comment>
<accession>Q63528</accession>
<accession>Q6AY60</accession>
<organism>
    <name type="scientific">Rattus norvegicus</name>
    <name type="common">Rat</name>
    <dbReference type="NCBI Taxonomy" id="10116"/>
    <lineage>
        <taxon>Eukaryota</taxon>
        <taxon>Metazoa</taxon>
        <taxon>Chordata</taxon>
        <taxon>Craniata</taxon>
        <taxon>Vertebrata</taxon>
        <taxon>Euteleostomi</taxon>
        <taxon>Mammalia</taxon>
        <taxon>Eutheria</taxon>
        <taxon>Euarchontoglires</taxon>
        <taxon>Glires</taxon>
        <taxon>Rodentia</taxon>
        <taxon>Myomorpha</taxon>
        <taxon>Muroidea</taxon>
        <taxon>Muridae</taxon>
        <taxon>Murinae</taxon>
        <taxon>Rattus</taxon>
    </lineage>
</organism>
<proteinExistence type="evidence at transcript level"/>
<sequence length="270" mass="29346">MWNSGFESFSSSSYGAAGGYTQSPGGFGSPTPSQAEKKSRARAQHIVPCTISQLLSATLTDEVFKIGDVEISQVTIVGIIRHAEKAPTNIVYKIDDMTAAPMDVRQWVDTDDTSGENTVVPPETYVKVAGHLRSFQNKKSLVAFKIIPLEDMNEFTAHILEVVNSHLMLSKANSQASVGRPSMSNPGMGEPGNFSGNNFMPANGLTVVQNQVLNLIKACPRPEGLNFQDLRSQLQHMPVASIKQAVDFLCNEGHIYSTVDDDHFKSTDAE</sequence>
<feature type="chain" id="PRO_0000097273" description="Replication protein A 32 kDa subunit">
    <location>
        <begin position="1"/>
        <end position="270"/>
    </location>
</feature>
<feature type="DNA-binding region" description="OB">
    <location>
        <begin position="74"/>
        <end position="148"/>
    </location>
</feature>
<feature type="region of interest" description="Disordered" evidence="3">
    <location>
        <begin position="22"/>
        <end position="41"/>
    </location>
</feature>
<feature type="region of interest" description="Interaction with RAD52, TIPIN, UNG and XPA" evidence="1">
    <location>
        <begin position="187"/>
        <end position="270"/>
    </location>
</feature>
<feature type="modified residue" description="N-acetylmethionine" evidence="2">
    <location>
        <position position="1"/>
    </location>
</feature>
<feature type="modified residue" description="Phosphoserine; by PRKDC" evidence="2">
    <location>
        <position position="4"/>
    </location>
</feature>
<feature type="modified residue" description="Phosphoserine; by PRKDC" evidence="2">
    <location>
        <position position="8"/>
    </location>
</feature>
<feature type="modified residue" description="Phosphothreonine; by PRKDC" evidence="2">
    <location>
        <position position="21"/>
    </location>
</feature>
<feature type="modified residue" description="Phosphoserine; by CDK2" evidence="2">
    <location>
        <position position="23"/>
    </location>
</feature>
<feature type="modified residue" description="Phosphoserine; by CDK1" evidence="2">
    <location>
        <position position="29"/>
    </location>
</feature>
<feature type="modified residue" description="Phosphoserine; by PRKDC" evidence="2">
    <location>
        <position position="33"/>
    </location>
</feature>
<feature type="cross-link" description="Glycyl lysine isopeptide (Lys-Gly) (interchain with G-Cter in ubiquitin)" evidence="2">
    <location>
        <position position="37"/>
    </location>
</feature>
<feature type="cross-link" description="Glycyl lysine isopeptide (Lys-Gly) (interchain with G-Cter in ubiquitin)" evidence="2">
    <location>
        <position position="38"/>
    </location>
</feature>
<keyword id="KW-0007">Acetylation</keyword>
<keyword id="KW-0227">DNA damage</keyword>
<keyword id="KW-0233">DNA recombination</keyword>
<keyword id="KW-0234">DNA repair</keyword>
<keyword id="KW-0235">DNA replication</keyword>
<keyword id="KW-0238">DNA-binding</keyword>
<keyword id="KW-1017">Isopeptide bond</keyword>
<keyword id="KW-0539">Nucleus</keyword>
<keyword id="KW-0597">Phosphoprotein</keyword>
<keyword id="KW-1185">Reference proteome</keyword>
<keyword id="KW-0832">Ubl conjugation</keyword>
<reference key="1">
    <citation type="journal article" date="2004" name="Genome Res.">
        <title>The status, quality, and expansion of the NIH full-length cDNA project: the Mammalian Gene Collection (MGC).</title>
        <authorList>
            <consortium name="The MGC Project Team"/>
        </authorList>
    </citation>
    <scope>NUCLEOTIDE SEQUENCE [LARGE SCALE MRNA]</scope>
    <source>
        <tissue>Kidney</tissue>
    </source>
</reference>
<reference key="2">
    <citation type="submission" date="1996-06" db="EMBL/GenBank/DDBJ databases">
        <authorList>
            <person name="Nagelhus T."/>
            <person name="Haug T."/>
            <person name="Krokan H.E."/>
        </authorList>
    </citation>
    <scope>NUCLEOTIDE SEQUENCE [MRNA] OF 5-270</scope>
</reference>
<name>RFA2_RAT</name>
<protein>
    <recommendedName>
        <fullName>Replication protein A 32 kDa subunit</fullName>
        <shortName>RP-A p32</shortName>
    </recommendedName>
    <alternativeName>
        <fullName>Replication factor A protein 2</fullName>
        <shortName>RF-A protein 2</shortName>
    </alternativeName>
</protein>
<gene>
    <name type="primary">Rpa2</name>
</gene>